<feature type="chain" id="PRO_0000217437" description="Uncharacterized 32.3 kDa protein in rbcL-atpE intergenic region">
    <location>
        <begin position="1"/>
        <end position="274"/>
    </location>
</feature>
<accession>P48338</accession>
<organism>
    <name type="scientific">Euglena gracilis</name>
    <dbReference type="NCBI Taxonomy" id="3039"/>
    <lineage>
        <taxon>Eukaryota</taxon>
        <taxon>Discoba</taxon>
        <taxon>Euglenozoa</taxon>
        <taxon>Euglenida</taxon>
        <taxon>Spirocuta</taxon>
        <taxon>Euglenophyceae</taxon>
        <taxon>Euglenales</taxon>
        <taxon>Euglenaceae</taxon>
        <taxon>Euglena</taxon>
    </lineage>
</organism>
<name>YCX6_EUGGR</name>
<keyword id="KW-0150">Chloroplast</keyword>
<keyword id="KW-0934">Plastid</keyword>
<comment type="subcellular location">
    <subcellularLocation>
        <location>Plastid</location>
        <location>Chloroplast</location>
    </subcellularLocation>
</comment>
<sequence>MSIDRILKQFLYKSIKPWQNKNIDDINQGEIYNIITNKSLTDNTINSVKRSFQNRLNENVNLTNVRKSYKKIKFVSFSLTKFYSNENNVFFVKLKIEIFVCDSFNTSLIRDFLNLITSEDILWIMYSVEPVILIHTDSKDKILQETYLKLECKAVKSQLYLNIYVIFDEKRVWTKNLVESFFSTIKNGKILNISNVPKLGGLCFCYVLNNLLLKANKKNQLAEIKIYQHTKYEIPSKYKIKFINESPLFLREYTGSLNFLYILLSMLLDNITNK</sequence>
<reference key="1">
    <citation type="journal article" date="1993" name="Nucleic Acids Res.">
        <title>Complete sequence of Euglena gracilis chloroplast DNA.</title>
        <authorList>
            <person name="Hallick R.B."/>
            <person name="Hong L."/>
            <person name="Drager R.G."/>
            <person name="Favreau M.R."/>
            <person name="Monfort A."/>
            <person name="Orsat B."/>
            <person name="Spielmann A."/>
            <person name="Stutz E."/>
        </authorList>
    </citation>
    <scope>NUCLEOTIDE SEQUENCE [LARGE SCALE GENOMIC DNA]</scope>
    <source>
        <strain>Z / UTEX 753</strain>
    </source>
</reference>
<proteinExistence type="predicted"/>
<protein>
    <recommendedName>
        <fullName>Uncharacterized 32.3 kDa protein in rbcL-atpE intergenic region</fullName>
    </recommendedName>
    <alternativeName>
        <fullName>ORF274</fullName>
    </alternativeName>
</protein>
<dbReference type="EMBL" id="Z11874">
    <property type="status" value="NOT_ANNOTATED_CDS"/>
    <property type="molecule type" value="Genomic_DNA"/>
</dbReference>
<dbReference type="EMBL" id="X70810">
    <property type="protein sequence ID" value="CAA50124.1"/>
    <property type="molecule type" value="Genomic_DNA"/>
</dbReference>
<dbReference type="PIR" id="S34543">
    <property type="entry name" value="S34543"/>
</dbReference>
<dbReference type="RefSeq" id="NP_041937.1">
    <property type="nucleotide sequence ID" value="NC_001603.2"/>
</dbReference>
<dbReference type="GeneID" id="1457327"/>
<dbReference type="GO" id="GO:0009507">
    <property type="term" value="C:chloroplast"/>
    <property type="evidence" value="ECO:0007669"/>
    <property type="project" value="UniProtKB-SubCell"/>
</dbReference>
<geneLocation type="chloroplast"/>